<proteinExistence type="inferred from homology"/>
<accession>Q7QCK2</accession>
<organism>
    <name type="scientific">Anopheles gambiae</name>
    <name type="common">African malaria mosquito</name>
    <dbReference type="NCBI Taxonomy" id="7165"/>
    <lineage>
        <taxon>Eukaryota</taxon>
        <taxon>Metazoa</taxon>
        <taxon>Ecdysozoa</taxon>
        <taxon>Arthropoda</taxon>
        <taxon>Hexapoda</taxon>
        <taxon>Insecta</taxon>
        <taxon>Pterygota</taxon>
        <taxon>Neoptera</taxon>
        <taxon>Endopterygota</taxon>
        <taxon>Diptera</taxon>
        <taxon>Nematocera</taxon>
        <taxon>Culicoidea</taxon>
        <taxon>Culicidae</taxon>
        <taxon>Anophelinae</taxon>
        <taxon>Anopheles</taxon>
    </lineage>
</organism>
<evidence type="ECO:0000250" key="1">
    <source>
        <dbReference type="UniProtKB" id="P13693"/>
    </source>
</evidence>
<evidence type="ECO:0000250" key="2">
    <source>
        <dbReference type="UniProtKB" id="Q9VGS2"/>
    </source>
</evidence>
<evidence type="ECO:0000255" key="3">
    <source>
        <dbReference type="PROSITE-ProRule" id="PRU01133"/>
    </source>
</evidence>
<evidence type="ECO:0000312" key="4">
    <source>
        <dbReference type="EMBL" id="EAA08161.2"/>
    </source>
</evidence>
<sequence>MKIWKDVFTGDEMFSDTYKVKLVDDVMYEVYGKHVSRTLGDVQLDGANPSAEEAEEGTESATESGVDIVLNHRLVETGFSDKKQFTTYLKDYMKKLVTRLEEKSPGEVEVFKTNINKVMKDLLGRFKDLQFFTGESMDCEGLIAMLEYRDIDGESVPVLLCFKHGLEEEKF</sequence>
<keyword id="KW-0106">Calcium</keyword>
<keyword id="KW-0963">Cytoplasm</keyword>
<keyword id="KW-1185">Reference proteome</keyword>
<reference evidence="4" key="1">
    <citation type="journal article" date="2002" name="Science">
        <title>The genome sequence of the malaria mosquito Anopheles gambiae.</title>
        <authorList>
            <person name="Holt R.A."/>
            <person name="Subramanian G.M."/>
            <person name="Halpern A."/>
            <person name="Sutton G.G."/>
            <person name="Charlab R."/>
            <person name="Nusskern D.R."/>
            <person name="Wincker P."/>
            <person name="Clark A.G."/>
            <person name="Ribeiro J.M.C."/>
            <person name="Wides R."/>
            <person name="Salzberg S.L."/>
            <person name="Loftus B.J."/>
            <person name="Yandell M.D."/>
            <person name="Majoros W.H."/>
            <person name="Rusch D.B."/>
            <person name="Lai Z."/>
            <person name="Kraft C.L."/>
            <person name="Abril J.F."/>
            <person name="Anthouard V."/>
            <person name="Arensburger P."/>
            <person name="Atkinson P.W."/>
            <person name="Baden H."/>
            <person name="de Berardinis V."/>
            <person name="Baldwin D."/>
            <person name="Benes V."/>
            <person name="Biedler J."/>
            <person name="Blass C."/>
            <person name="Bolanos R."/>
            <person name="Boscus D."/>
            <person name="Barnstead M."/>
            <person name="Cai S."/>
            <person name="Center A."/>
            <person name="Chaturverdi K."/>
            <person name="Christophides G.K."/>
            <person name="Chrystal M.A.M."/>
            <person name="Clamp M."/>
            <person name="Cravchik A."/>
            <person name="Curwen V."/>
            <person name="Dana A."/>
            <person name="Delcher A."/>
            <person name="Dew I."/>
            <person name="Evans C.A."/>
            <person name="Flanigan M."/>
            <person name="Grundschober-Freimoser A."/>
            <person name="Friedli L."/>
            <person name="Gu Z."/>
            <person name="Guan P."/>
            <person name="Guigo R."/>
            <person name="Hillenmeyer M.E."/>
            <person name="Hladun S.L."/>
            <person name="Hogan J.R."/>
            <person name="Hong Y.S."/>
            <person name="Hoover J."/>
            <person name="Jaillon O."/>
            <person name="Ke Z."/>
            <person name="Kodira C.D."/>
            <person name="Kokoza E."/>
            <person name="Koutsos A."/>
            <person name="Letunic I."/>
            <person name="Levitsky A.A."/>
            <person name="Liang Y."/>
            <person name="Lin J.-J."/>
            <person name="Lobo N.F."/>
            <person name="Lopez J.R."/>
            <person name="Malek J.A."/>
            <person name="McIntosh T.C."/>
            <person name="Meister S."/>
            <person name="Miller J.R."/>
            <person name="Mobarry C."/>
            <person name="Mongin E."/>
            <person name="Murphy S.D."/>
            <person name="O'Brochta D.A."/>
            <person name="Pfannkoch C."/>
            <person name="Qi R."/>
            <person name="Regier M.A."/>
            <person name="Remington K."/>
            <person name="Shao H."/>
            <person name="Sharakhova M.V."/>
            <person name="Sitter C.D."/>
            <person name="Shetty J."/>
            <person name="Smith T.J."/>
            <person name="Strong R."/>
            <person name="Sun J."/>
            <person name="Thomasova D."/>
            <person name="Ton L.Q."/>
            <person name="Topalis P."/>
            <person name="Tu Z.J."/>
            <person name="Unger M.F."/>
            <person name="Walenz B."/>
            <person name="Wang A.H."/>
            <person name="Wang J."/>
            <person name="Wang M."/>
            <person name="Wang X."/>
            <person name="Woodford K.J."/>
            <person name="Wortman J.R."/>
            <person name="Wu M."/>
            <person name="Yao A."/>
            <person name="Zdobnov E.M."/>
            <person name="Zhang H."/>
            <person name="Zhao Q."/>
            <person name="Zhao S."/>
            <person name="Zhu S.C."/>
            <person name="Zhimulev I."/>
            <person name="Coluzzi M."/>
            <person name="della Torre A."/>
            <person name="Roth C.W."/>
            <person name="Louis C."/>
            <person name="Kalush F."/>
            <person name="Mural R.J."/>
            <person name="Myers E.W."/>
            <person name="Adams M.D."/>
            <person name="Smith H.O."/>
            <person name="Broder S."/>
            <person name="Gardner M.J."/>
            <person name="Fraser C.M."/>
            <person name="Birney E."/>
            <person name="Bork P."/>
            <person name="Brey P.T."/>
            <person name="Venter J.C."/>
            <person name="Weissenbach J."/>
            <person name="Kafatos F.C."/>
            <person name="Collins F.H."/>
            <person name="Hoffman S.L."/>
        </authorList>
    </citation>
    <scope>NUCLEOTIDE SEQUENCE [LARGE SCALE GENOMIC DNA]</scope>
    <source>
        <strain evidence="4">PEST</strain>
    </source>
</reference>
<name>TCTP_ANOGA</name>
<dbReference type="EMBL" id="AAAB01008859">
    <property type="protein sequence ID" value="EAA08161.2"/>
    <property type="molecule type" value="Genomic_DNA"/>
</dbReference>
<dbReference type="SMR" id="Q7QCK2"/>
<dbReference type="FunCoup" id="Q7QCK2">
    <property type="interactions" value="1553"/>
</dbReference>
<dbReference type="STRING" id="7165.Q7QCK2"/>
<dbReference type="PaxDb" id="7165-AGAP002667-PA"/>
<dbReference type="EnsemblMetazoa" id="AGAP002667-RA">
    <property type="protein sequence ID" value="AGAP002667-PA"/>
    <property type="gene ID" value="AGAP002667"/>
</dbReference>
<dbReference type="GeneID" id="1273293"/>
<dbReference type="KEGG" id="aga:1273293"/>
<dbReference type="CTD" id="41341"/>
<dbReference type="VEuPathDB" id="VectorBase:AGAMI1_010090"/>
<dbReference type="VEuPathDB" id="VectorBase:AGAP002667"/>
<dbReference type="eggNOG" id="KOG1727">
    <property type="taxonomic scope" value="Eukaryota"/>
</dbReference>
<dbReference type="HOGENOM" id="CLU_095877_0_1_1"/>
<dbReference type="InParanoid" id="Q7QCK2"/>
<dbReference type="OMA" id="CAMITEG"/>
<dbReference type="OrthoDB" id="10248936at2759"/>
<dbReference type="PhylomeDB" id="Q7QCK2"/>
<dbReference type="Proteomes" id="UP000007062">
    <property type="component" value="Chromosome 2R"/>
</dbReference>
<dbReference type="GO" id="GO:0005737">
    <property type="term" value="C:cytoplasm"/>
    <property type="evidence" value="ECO:0000318"/>
    <property type="project" value="GO_Central"/>
</dbReference>
<dbReference type="GO" id="GO:0005509">
    <property type="term" value="F:calcium ion binding"/>
    <property type="evidence" value="ECO:0000318"/>
    <property type="project" value="GO_Central"/>
</dbReference>
<dbReference type="FunFam" id="2.170.150.10:FF:000002">
    <property type="entry name" value="Translationally-controlled tumor protein homolog"/>
    <property type="match status" value="1"/>
</dbReference>
<dbReference type="Gene3D" id="2.170.150.10">
    <property type="entry name" value="Metal Binding Protein, Guanine Nucleotide Exchange Factor, Chain A"/>
    <property type="match status" value="1"/>
</dbReference>
<dbReference type="InterPro" id="IPR011057">
    <property type="entry name" value="Mss4-like_sf"/>
</dbReference>
<dbReference type="InterPro" id="IPR011323">
    <property type="entry name" value="Mss4/transl-control_tumour"/>
</dbReference>
<dbReference type="InterPro" id="IPR034737">
    <property type="entry name" value="TCTP"/>
</dbReference>
<dbReference type="InterPro" id="IPR018103">
    <property type="entry name" value="Translation_control_tumour_CS"/>
</dbReference>
<dbReference type="InterPro" id="IPR018105">
    <property type="entry name" value="Translational_control_tumour_p"/>
</dbReference>
<dbReference type="PANTHER" id="PTHR11991">
    <property type="entry name" value="TRANSLATIONALLY CONTROLLED TUMOR PROTEIN-RELATED"/>
    <property type="match status" value="1"/>
</dbReference>
<dbReference type="PANTHER" id="PTHR11991:SF0">
    <property type="entry name" value="TRANSLATIONALLY-CONTROLLED TUMOR PROTEIN"/>
    <property type="match status" value="1"/>
</dbReference>
<dbReference type="Pfam" id="PF00838">
    <property type="entry name" value="TCTP"/>
    <property type="match status" value="1"/>
</dbReference>
<dbReference type="PRINTS" id="PR01653">
    <property type="entry name" value="TCTPROTEIN"/>
</dbReference>
<dbReference type="SUPFAM" id="SSF51316">
    <property type="entry name" value="Mss4-like"/>
    <property type="match status" value="1"/>
</dbReference>
<dbReference type="PROSITE" id="PS01002">
    <property type="entry name" value="TCTP_1"/>
    <property type="match status" value="1"/>
</dbReference>
<dbReference type="PROSITE" id="PS01003">
    <property type="entry name" value="TCTP_2"/>
    <property type="match status" value="1"/>
</dbReference>
<dbReference type="PROSITE" id="PS51797">
    <property type="entry name" value="TCTP_3"/>
    <property type="match status" value="1"/>
</dbReference>
<comment type="function">
    <text evidence="1">Involved in calcium binding and microtubule stabilization.</text>
</comment>
<comment type="subcellular location">
    <subcellularLocation>
        <location evidence="1">Cytoplasm</location>
    </subcellularLocation>
</comment>
<comment type="similarity">
    <text evidence="3">Belongs to the TCTP family.</text>
</comment>
<protein>
    <recommendedName>
        <fullName>Translationally-controlled tumor protein homolog</fullName>
        <shortName>TCTP</shortName>
    </recommendedName>
</protein>
<feature type="chain" id="PRO_0000232399" description="Translationally-controlled tumor protein homolog">
    <location>
        <begin position="1"/>
        <end position="171"/>
    </location>
</feature>
<feature type="domain" description="TCTP" evidence="3">
    <location>
        <begin position="1"/>
        <end position="171"/>
    </location>
</feature>
<gene>
    <name evidence="2" type="primary">Tctp</name>
    <name type="ORF">AGAP002667</name>
</gene>